<organism>
    <name type="scientific">Pinus banksiana</name>
    <name type="common">Jack pine</name>
    <name type="synonym">Pinus divaricata</name>
    <dbReference type="NCBI Taxonomy" id="3353"/>
    <lineage>
        <taxon>Eukaryota</taxon>
        <taxon>Viridiplantae</taxon>
        <taxon>Streptophyta</taxon>
        <taxon>Embryophyta</taxon>
        <taxon>Tracheophyta</taxon>
        <taxon>Spermatophyta</taxon>
        <taxon>Pinopsida</taxon>
        <taxon>Pinidae</taxon>
        <taxon>Conifers I</taxon>
        <taxon>Pinales</taxon>
        <taxon>Pinaceae</taxon>
        <taxon>Pinus</taxon>
        <taxon>Pinus subgen. Pinus</taxon>
    </lineage>
</organism>
<name>MTPS1_PINBN</name>
<accession>R9QMR2</accession>
<comment type="function">
    <text evidence="3">Monoterpene synthase (TPS) involved in the biosynthesis of monoterpene natural products included in conifer oleoresin secretions and volatile emissions; these compounds contribute to biotic and abiotic stress defense against herbivores and pathogens.</text>
</comment>
<comment type="cofactor">
    <cofactor evidence="1">
        <name>Mg(2+)</name>
        <dbReference type="ChEBI" id="CHEBI:18420"/>
    </cofactor>
    <cofactor evidence="1">
        <name>Mn(2+)</name>
        <dbReference type="ChEBI" id="CHEBI:29035"/>
    </cofactor>
    <text evidence="1">Binds 3 Mg(2+) or Mn(2+) ions per subunit.</text>
</comment>
<comment type="pathway">
    <text evidence="5">Terpene metabolism; oleoresin biosynthesis.</text>
</comment>
<comment type="pathway">
    <text evidence="5">Secondary metabolite biosynthesis; terpenoid biosynthesis.</text>
</comment>
<comment type="subcellular location">
    <subcellularLocation>
        <location evidence="4">Plastid</location>
        <location evidence="4">Chloroplast</location>
    </subcellularLocation>
</comment>
<comment type="domain">
    <text evidence="7">The Asp-Asp-Xaa-Xaa-Asp/Glu (DDXXD/E) motif is important for the catalytic activity, presumably through binding to Mg(2+).</text>
</comment>
<comment type="similarity">
    <text evidence="7">Belongs to the terpene synthase family. Tpsd subfamily.</text>
</comment>
<gene>
    <name evidence="6" type="primary">TPS-mono1</name>
</gene>
<feature type="transit peptide" description="Chloroplast" evidence="4">
    <location>
        <begin position="1"/>
        <end status="unknown"/>
    </location>
</feature>
<feature type="chain" id="PRO_0000455028" description="Monoterpene synthase like 1, chloroplastic">
    <location>
        <begin status="unknown"/>
        <end position="628"/>
    </location>
</feature>
<feature type="short sequence motif" description="DDXXD motif" evidence="7">
    <location>
        <begin position="379"/>
        <end position="383"/>
    </location>
</feature>
<feature type="binding site" evidence="2">
    <location>
        <position position="379"/>
    </location>
    <ligand>
        <name>Mg(2+)</name>
        <dbReference type="ChEBI" id="CHEBI:18420"/>
        <label>1</label>
    </ligand>
</feature>
<feature type="binding site" evidence="2">
    <location>
        <position position="379"/>
    </location>
    <ligand>
        <name>Mg(2+)</name>
        <dbReference type="ChEBI" id="CHEBI:18420"/>
        <label>2</label>
    </ligand>
</feature>
<feature type="binding site" evidence="2">
    <location>
        <position position="383"/>
    </location>
    <ligand>
        <name>Mg(2+)</name>
        <dbReference type="ChEBI" id="CHEBI:18420"/>
        <label>1</label>
    </ligand>
</feature>
<feature type="binding site" evidence="2">
    <location>
        <position position="383"/>
    </location>
    <ligand>
        <name>Mg(2+)</name>
        <dbReference type="ChEBI" id="CHEBI:18420"/>
        <label>2</label>
    </ligand>
</feature>
<feature type="binding site" evidence="2">
    <location>
        <position position="531"/>
    </location>
    <ligand>
        <name>Mg(2+)</name>
        <dbReference type="ChEBI" id="CHEBI:18420"/>
        <label>3</label>
    </ligand>
</feature>
<keyword id="KW-0150">Chloroplast</keyword>
<keyword id="KW-0456">Lyase</keyword>
<keyword id="KW-0460">Magnesium</keyword>
<keyword id="KW-0479">Metal-binding</keyword>
<keyword id="KW-0934">Plastid</keyword>
<keyword id="KW-0809">Transit peptide</keyword>
<sequence>MALVSAVPLDSRLCLCRTLFGLTHELKAIRRTIPNLGMCRGGKSIAPSMSMSSTTFVSSEDGVPRRIGGHHSNLWDDDSIDSLSTSYEAPSYRERADRLIGEVKDMFHLISVEDGVSTSPLNDLHHRLWMVDSVERLGIDRHFKNETNAALDHVYSYWTEKGIGRGRESGATDLNSTALGLRTLRLHGYMVSSHVLDHFKNEKGQFACSAIQTDGEIRDVLNLFRASLIAFPGEKIMEEAEMFSTMFLKDALQKIPPSGLSQEIEYLLEFGWHTNLPRMETRMYIDVFGEDTTFETPYLIRERLLELAKLEFNIFHSLVKRELQSLSRWWKDYGFPEITFSRHRHVEYYTLAACIANDPKHSAFRLGFAKICHMVTILDDIYDTFGTMEELELLTAAFKRWDPSSIECLPDYMKGVYMAVYDNINETAREAQKIQGWDIVSYARKSWEALFDAHMQEARWISSGYLPTFEEYLENGKVSFGSRLTTLEPMLTLGFPLSPRILQEIDFPSNFNELICAILRLRGDTQCYKADMARGEEASSVSCYMKDHPGITEEDAVNQINALVNNLTKELNWELLRPDSGVPISYKKFYFDIWRVFHYGYKYRDGFSVASIEIKNLVTRTVVETVPL</sequence>
<protein>
    <recommendedName>
        <fullName evidence="6">Monoterpene synthase like 1, chloroplastic</fullName>
        <shortName evidence="6">PbTPS-mono1</shortName>
        <ecNumber evidence="3">4.2.3.-</ecNumber>
    </recommendedName>
</protein>
<evidence type="ECO:0000250" key="1">
    <source>
        <dbReference type="UniProtKB" id="A0A1C9J6A7"/>
    </source>
</evidence>
<evidence type="ECO:0000250" key="2">
    <source>
        <dbReference type="UniProtKB" id="Q40577"/>
    </source>
</evidence>
<evidence type="ECO:0000250" key="3">
    <source>
        <dbReference type="UniProtKB" id="R9QMW4"/>
    </source>
</evidence>
<evidence type="ECO:0000255" key="4"/>
<evidence type="ECO:0000269" key="5">
    <source>
    </source>
</evidence>
<evidence type="ECO:0000303" key="6">
    <source>
    </source>
</evidence>
<evidence type="ECO:0000305" key="7"/>
<reference key="1">
    <citation type="journal article" date="2013" name="BMC Plant Biol.">
        <title>Transcriptome resources and functional characterization of monoterpene synthases for two host species of the mountain pine beetle, lodgepole pine (Pinus contorta) and jack pine (Pinus banksiana).</title>
        <authorList>
            <person name="Hall D.E."/>
            <person name="Yuen M.M.S."/>
            <person name="Jancsik S."/>
            <person name="Quesada A.L."/>
            <person name="Dullat H.K."/>
            <person name="Li M."/>
            <person name="Henderson H."/>
            <person name="Arango-Velez A."/>
            <person name="Liao N.Y."/>
            <person name="Docking R.T."/>
            <person name="Chan S.K."/>
            <person name="Cooke J.E.K."/>
            <person name="Breuil C."/>
            <person name="Jones S.J.M."/>
            <person name="Keeling C.I."/>
            <person name="Bohlmann J."/>
        </authorList>
    </citation>
    <scope>NUCLEOTIDE SEQUENCE [MRNA]</scope>
    <scope>FUNCTION</scope>
    <scope>CATALYTIC ACTIVITY</scope>
    <scope>PATHWAY</scope>
</reference>
<dbReference type="EC" id="4.2.3.-" evidence="3"/>
<dbReference type="EMBL" id="JQ240296">
    <property type="protein sequence ID" value="AFU73848.1"/>
    <property type="molecule type" value="mRNA"/>
</dbReference>
<dbReference type="SMR" id="R9QMR2"/>
<dbReference type="UniPathway" id="UPA00213"/>
<dbReference type="UniPathway" id="UPA00924"/>
<dbReference type="GO" id="GO:0009507">
    <property type="term" value="C:chloroplast"/>
    <property type="evidence" value="ECO:0007669"/>
    <property type="project" value="UniProtKB-SubCell"/>
</dbReference>
<dbReference type="GO" id="GO:0000287">
    <property type="term" value="F:magnesium ion binding"/>
    <property type="evidence" value="ECO:0007669"/>
    <property type="project" value="InterPro"/>
</dbReference>
<dbReference type="GO" id="GO:0010333">
    <property type="term" value="F:terpene synthase activity"/>
    <property type="evidence" value="ECO:0000314"/>
    <property type="project" value="UniProtKB"/>
</dbReference>
<dbReference type="GO" id="GO:0016102">
    <property type="term" value="P:diterpenoid biosynthetic process"/>
    <property type="evidence" value="ECO:0007669"/>
    <property type="project" value="InterPro"/>
</dbReference>
<dbReference type="GO" id="GO:0010597">
    <property type="term" value="P:green leaf volatile biosynthetic process"/>
    <property type="evidence" value="ECO:0000314"/>
    <property type="project" value="UniProtKB"/>
</dbReference>
<dbReference type="GO" id="GO:0016114">
    <property type="term" value="P:terpenoid biosynthetic process"/>
    <property type="evidence" value="ECO:0000314"/>
    <property type="project" value="UniProtKB"/>
</dbReference>
<dbReference type="CDD" id="cd00684">
    <property type="entry name" value="Terpene_cyclase_plant_C1"/>
    <property type="match status" value="1"/>
</dbReference>
<dbReference type="FunFam" id="1.50.10.130:FF:000002">
    <property type="entry name" value="Ent-copalyl diphosphate synthase, chloroplastic"/>
    <property type="match status" value="1"/>
</dbReference>
<dbReference type="FunFam" id="1.10.600.10:FF:000005">
    <property type="entry name" value="Ent-kaur-16-ene synthase, chloroplastic"/>
    <property type="match status" value="1"/>
</dbReference>
<dbReference type="Gene3D" id="1.10.600.10">
    <property type="entry name" value="Farnesyl Diphosphate Synthase"/>
    <property type="match status" value="1"/>
</dbReference>
<dbReference type="Gene3D" id="1.50.10.130">
    <property type="entry name" value="Terpene synthase, N-terminal domain"/>
    <property type="match status" value="1"/>
</dbReference>
<dbReference type="InterPro" id="IPR008949">
    <property type="entry name" value="Isoprenoid_synthase_dom_sf"/>
</dbReference>
<dbReference type="InterPro" id="IPR034741">
    <property type="entry name" value="Terpene_cyclase-like_1_C"/>
</dbReference>
<dbReference type="InterPro" id="IPR044814">
    <property type="entry name" value="Terpene_cyclase_plant_C1"/>
</dbReference>
<dbReference type="InterPro" id="IPR001906">
    <property type="entry name" value="Terpene_synth_N"/>
</dbReference>
<dbReference type="InterPro" id="IPR036965">
    <property type="entry name" value="Terpene_synth_N_sf"/>
</dbReference>
<dbReference type="InterPro" id="IPR050148">
    <property type="entry name" value="Terpene_synthase-like"/>
</dbReference>
<dbReference type="InterPro" id="IPR005630">
    <property type="entry name" value="Terpene_synthase_metal-bd"/>
</dbReference>
<dbReference type="InterPro" id="IPR008930">
    <property type="entry name" value="Terpenoid_cyclase/PrenylTrfase"/>
</dbReference>
<dbReference type="PANTHER" id="PTHR31739:SF25">
    <property type="entry name" value="(E,E)-GERANYLLINALOOL SYNTHASE"/>
    <property type="match status" value="1"/>
</dbReference>
<dbReference type="PANTHER" id="PTHR31739">
    <property type="entry name" value="ENT-COPALYL DIPHOSPHATE SYNTHASE, CHLOROPLASTIC"/>
    <property type="match status" value="1"/>
</dbReference>
<dbReference type="Pfam" id="PF01397">
    <property type="entry name" value="Terpene_synth"/>
    <property type="match status" value="1"/>
</dbReference>
<dbReference type="Pfam" id="PF03936">
    <property type="entry name" value="Terpene_synth_C"/>
    <property type="match status" value="1"/>
</dbReference>
<dbReference type="SFLD" id="SFLDS00005">
    <property type="entry name" value="Isoprenoid_Synthase_Type_I"/>
    <property type="match status" value="1"/>
</dbReference>
<dbReference type="SFLD" id="SFLDG01019">
    <property type="entry name" value="Terpene_Cyclase_Like_1_C_Termi"/>
    <property type="match status" value="1"/>
</dbReference>
<dbReference type="SFLD" id="SFLDG01014">
    <property type="entry name" value="Terpene_Cyclase_Like_1_N-term"/>
    <property type="match status" value="1"/>
</dbReference>
<dbReference type="SUPFAM" id="SSF48239">
    <property type="entry name" value="Terpenoid cyclases/Protein prenyltransferases"/>
    <property type="match status" value="1"/>
</dbReference>
<dbReference type="SUPFAM" id="SSF48576">
    <property type="entry name" value="Terpenoid synthases"/>
    <property type="match status" value="1"/>
</dbReference>
<proteinExistence type="evidence at protein level"/>